<reference key="1">
    <citation type="journal article" date="2004" name="Nature">
        <title>Genome evolution in yeasts.</title>
        <authorList>
            <person name="Dujon B."/>
            <person name="Sherman D."/>
            <person name="Fischer G."/>
            <person name="Durrens P."/>
            <person name="Casaregola S."/>
            <person name="Lafontaine I."/>
            <person name="de Montigny J."/>
            <person name="Marck C."/>
            <person name="Neuveglise C."/>
            <person name="Talla E."/>
            <person name="Goffard N."/>
            <person name="Frangeul L."/>
            <person name="Aigle M."/>
            <person name="Anthouard V."/>
            <person name="Babour A."/>
            <person name="Barbe V."/>
            <person name="Barnay S."/>
            <person name="Blanchin S."/>
            <person name="Beckerich J.-M."/>
            <person name="Beyne E."/>
            <person name="Bleykasten C."/>
            <person name="Boisrame A."/>
            <person name="Boyer J."/>
            <person name="Cattolico L."/>
            <person name="Confanioleri F."/>
            <person name="de Daruvar A."/>
            <person name="Despons L."/>
            <person name="Fabre E."/>
            <person name="Fairhead C."/>
            <person name="Ferry-Dumazet H."/>
            <person name="Groppi A."/>
            <person name="Hantraye F."/>
            <person name="Hennequin C."/>
            <person name="Jauniaux N."/>
            <person name="Joyet P."/>
            <person name="Kachouri R."/>
            <person name="Kerrest A."/>
            <person name="Koszul R."/>
            <person name="Lemaire M."/>
            <person name="Lesur I."/>
            <person name="Ma L."/>
            <person name="Muller H."/>
            <person name="Nicaud J.-M."/>
            <person name="Nikolski M."/>
            <person name="Oztas S."/>
            <person name="Ozier-Kalogeropoulos O."/>
            <person name="Pellenz S."/>
            <person name="Potier S."/>
            <person name="Richard G.-F."/>
            <person name="Straub M.-L."/>
            <person name="Suleau A."/>
            <person name="Swennen D."/>
            <person name="Tekaia F."/>
            <person name="Wesolowski-Louvel M."/>
            <person name="Westhof E."/>
            <person name="Wirth B."/>
            <person name="Zeniou-Meyer M."/>
            <person name="Zivanovic Y."/>
            <person name="Bolotin-Fukuhara M."/>
            <person name="Thierry A."/>
            <person name="Bouchier C."/>
            <person name="Caudron B."/>
            <person name="Scarpelli C."/>
            <person name="Gaillardin C."/>
            <person name="Weissenbach J."/>
            <person name="Wincker P."/>
            <person name="Souciet J.-L."/>
        </authorList>
    </citation>
    <scope>NUCLEOTIDE SEQUENCE [LARGE SCALE GENOMIC DNA]</scope>
    <source>
        <strain>ATCC 36239 / CBS 767 / BCRC 21394 / JCM 1990 / NBRC 0083 / IGC 2968</strain>
    </source>
</reference>
<sequence length="590" mass="65992">MGIIDNFKSFVHSITTEDHYASYDSPYKNSAVNNVGTTVGGGNSSSRLHELNRLATVNSSSHSLIEGGNNGSRTSLSRNGSSTTVGYRPGLRSSNTNSSELQLQNLNASGQPPLPSIDSLWDRIESWLEEEYPELGDNLNDGVTTADLNEFENDLGCGSLPVEIRQFYKRHDGQFRGGKPTGLVMGLTLLDLEGIIEEYAIWAKVNQRLEKQQYMFQHQQQQQQHQKATSSADASETHGHENKINNSFIANQKSIPPNAIQPYYAHRGWIPFLKDFCGNQIAIDLAPGPQGHWGQIIIFGRDYDTKLVIASNLQEFMFGFVSDLELGNFQIDQNDQDGGFLDGSRNDDDYMIGDGEEDQGELCFRDREQKEFGNSIKGKLTYLEVLKRRALKTFGITNLEKFSTSFTPQRMPHAKPNASGMASPVRAASPSMSGATANTNKSQNPLINMESSSKVALPKETLIDEDEKVPEEPVKKSEVKSVKNTAAAEPEKETKQKDEIIEEKPEVIETPAKEDDKEEEEEEQEEEKEQEKEHENEEAPEDEQNEDAKPLTKTQKKNQSKKAKKQQQKQKQNETNDVEEVAEDLNDVAL</sequence>
<gene>
    <name type="ordered locus">DEHA2F26422g</name>
</gene>
<organism>
    <name type="scientific">Debaryomyces hansenii (strain ATCC 36239 / CBS 767 / BCRC 21394 / JCM 1990 / NBRC 0083 / IGC 2968)</name>
    <name type="common">Yeast</name>
    <name type="synonym">Torulaspora hansenii</name>
    <dbReference type="NCBI Taxonomy" id="284592"/>
    <lineage>
        <taxon>Eukaryota</taxon>
        <taxon>Fungi</taxon>
        <taxon>Dikarya</taxon>
        <taxon>Ascomycota</taxon>
        <taxon>Saccharomycotina</taxon>
        <taxon>Pichiomycetes</taxon>
        <taxon>Debaryomycetaceae</taxon>
        <taxon>Debaryomyces</taxon>
    </lineage>
</organism>
<accession>Q6BJY4</accession>
<accession>B5RUP3</accession>
<name>SMI2_DEBHA</name>
<keyword id="KW-1185">Reference proteome</keyword>
<proteinExistence type="inferred from homology"/>
<feature type="chain" id="PRO_0000209875" description="KNR4/SMI1 homolog 2">
    <location>
        <begin position="1"/>
        <end position="590"/>
    </location>
</feature>
<feature type="region of interest" description="Disordered" evidence="1">
    <location>
        <begin position="59"/>
        <end position="97"/>
    </location>
</feature>
<feature type="region of interest" description="Disordered" evidence="1">
    <location>
        <begin position="216"/>
        <end position="239"/>
    </location>
</feature>
<feature type="region of interest" description="Disordered" evidence="1">
    <location>
        <begin position="407"/>
        <end position="590"/>
    </location>
</feature>
<feature type="compositionally biased region" description="Polar residues" evidence="1">
    <location>
        <begin position="71"/>
        <end position="85"/>
    </location>
</feature>
<feature type="compositionally biased region" description="Low complexity" evidence="1">
    <location>
        <begin position="217"/>
        <end position="226"/>
    </location>
</feature>
<feature type="compositionally biased region" description="Polar residues" evidence="1">
    <location>
        <begin position="430"/>
        <end position="454"/>
    </location>
</feature>
<feature type="compositionally biased region" description="Basic and acidic residues" evidence="1">
    <location>
        <begin position="470"/>
        <end position="481"/>
    </location>
</feature>
<feature type="compositionally biased region" description="Basic and acidic residues" evidence="1">
    <location>
        <begin position="489"/>
        <end position="515"/>
    </location>
</feature>
<feature type="compositionally biased region" description="Acidic residues" evidence="1">
    <location>
        <begin position="516"/>
        <end position="528"/>
    </location>
</feature>
<feature type="compositionally biased region" description="Basic residues" evidence="1">
    <location>
        <begin position="554"/>
        <end position="568"/>
    </location>
</feature>
<feature type="compositionally biased region" description="Acidic residues" evidence="1">
    <location>
        <begin position="576"/>
        <end position="590"/>
    </location>
</feature>
<protein>
    <recommendedName>
        <fullName>KNR4/SMI1 homolog 2</fullName>
    </recommendedName>
</protein>
<dbReference type="EMBL" id="CR382138">
    <property type="protein sequence ID" value="CAR66421.1"/>
    <property type="molecule type" value="Genomic_DNA"/>
</dbReference>
<dbReference type="RefSeq" id="XP_002770906.1">
    <property type="nucleotide sequence ID" value="XM_002770860.1"/>
</dbReference>
<dbReference type="SMR" id="Q6BJY4"/>
<dbReference type="STRING" id="284592.Q6BJY4"/>
<dbReference type="GeneID" id="8999077"/>
<dbReference type="KEGG" id="dha:DEHA2F26422g"/>
<dbReference type="VEuPathDB" id="FungiDB:DEHA2F26422g"/>
<dbReference type="eggNOG" id="ENOG502QTAZ">
    <property type="taxonomic scope" value="Eukaryota"/>
</dbReference>
<dbReference type="HOGENOM" id="CLU_027501_1_0_1"/>
<dbReference type="InParanoid" id="Q6BJY4"/>
<dbReference type="OMA" id="HIGNQIA"/>
<dbReference type="OrthoDB" id="2305498at2759"/>
<dbReference type="Proteomes" id="UP000000599">
    <property type="component" value="Chromosome F"/>
</dbReference>
<dbReference type="GO" id="GO:0043332">
    <property type="term" value="C:mating projection tip"/>
    <property type="evidence" value="ECO:0007669"/>
    <property type="project" value="TreeGrafter"/>
</dbReference>
<dbReference type="GO" id="GO:0070880">
    <property type="term" value="P:fungal-type cell wall beta-glucan biosynthetic process"/>
    <property type="evidence" value="ECO:0007669"/>
    <property type="project" value="TreeGrafter"/>
</dbReference>
<dbReference type="InterPro" id="IPR009203">
    <property type="entry name" value="Knr4/Smi1"/>
</dbReference>
<dbReference type="InterPro" id="IPR018958">
    <property type="entry name" value="Knr4/Smi1-like_dom"/>
</dbReference>
<dbReference type="InterPro" id="IPR037883">
    <property type="entry name" value="Knr4/Smi1-like_sf"/>
</dbReference>
<dbReference type="InterPro" id="IPR051873">
    <property type="entry name" value="KNR4/SMI1_regulator"/>
</dbReference>
<dbReference type="PANTHER" id="PTHR47432">
    <property type="entry name" value="CELL WALL ASSEMBLY REGULATOR SMI1"/>
    <property type="match status" value="1"/>
</dbReference>
<dbReference type="PANTHER" id="PTHR47432:SF1">
    <property type="entry name" value="CELL WALL ASSEMBLY REGULATOR SMI1"/>
    <property type="match status" value="1"/>
</dbReference>
<dbReference type="Pfam" id="PF09346">
    <property type="entry name" value="SMI1_KNR4"/>
    <property type="match status" value="1"/>
</dbReference>
<dbReference type="PIRSF" id="PIRSF017023">
    <property type="entry name" value="KNR4"/>
    <property type="match status" value="1"/>
</dbReference>
<dbReference type="SMART" id="SM00860">
    <property type="entry name" value="SMI1_KNR4"/>
    <property type="match status" value="1"/>
</dbReference>
<dbReference type="SUPFAM" id="SSF160631">
    <property type="entry name" value="SMI1/KNR4-like"/>
    <property type="match status" value="1"/>
</dbReference>
<comment type="similarity">
    <text evidence="2">Belongs to the KNR4/SMI1 family.</text>
</comment>
<evidence type="ECO:0000256" key="1">
    <source>
        <dbReference type="SAM" id="MobiDB-lite"/>
    </source>
</evidence>
<evidence type="ECO:0000305" key="2"/>